<accession>B9MFR5</accession>
<feature type="chain" id="PRO_1000117178" description="Phospho-N-acetylmuramoyl-pentapeptide-transferase">
    <location>
        <begin position="1"/>
        <end position="392"/>
    </location>
</feature>
<feature type="transmembrane region" description="Helical" evidence="1">
    <location>
        <begin position="24"/>
        <end position="44"/>
    </location>
</feature>
<feature type="transmembrane region" description="Helical" evidence="1">
    <location>
        <begin position="76"/>
        <end position="96"/>
    </location>
</feature>
<feature type="transmembrane region" description="Helical" evidence="1">
    <location>
        <begin position="100"/>
        <end position="120"/>
    </location>
</feature>
<feature type="transmembrane region" description="Helical" evidence="1">
    <location>
        <begin position="137"/>
        <end position="157"/>
    </location>
</feature>
<feature type="transmembrane region" description="Helical" evidence="1">
    <location>
        <begin position="167"/>
        <end position="187"/>
    </location>
</feature>
<feature type="transmembrane region" description="Helical" evidence="1">
    <location>
        <begin position="193"/>
        <end position="213"/>
    </location>
</feature>
<feature type="transmembrane region" description="Helical" evidence="1">
    <location>
        <begin position="225"/>
        <end position="245"/>
    </location>
</feature>
<feature type="transmembrane region" description="Helical" evidence="1">
    <location>
        <begin position="262"/>
        <end position="282"/>
    </location>
</feature>
<feature type="transmembrane region" description="Helical" evidence="1">
    <location>
        <begin position="289"/>
        <end position="309"/>
    </location>
</feature>
<feature type="transmembrane region" description="Helical" evidence="1">
    <location>
        <begin position="314"/>
        <end position="334"/>
    </location>
</feature>
<feature type="transmembrane region" description="Helical" evidence="1">
    <location>
        <begin position="369"/>
        <end position="389"/>
    </location>
</feature>
<gene>
    <name evidence="1" type="primary">mraY</name>
    <name type="ordered locus">Dtpsy_2983</name>
</gene>
<keyword id="KW-0131">Cell cycle</keyword>
<keyword id="KW-0132">Cell division</keyword>
<keyword id="KW-0997">Cell inner membrane</keyword>
<keyword id="KW-1003">Cell membrane</keyword>
<keyword id="KW-0133">Cell shape</keyword>
<keyword id="KW-0961">Cell wall biogenesis/degradation</keyword>
<keyword id="KW-0460">Magnesium</keyword>
<keyword id="KW-0472">Membrane</keyword>
<keyword id="KW-0479">Metal-binding</keyword>
<keyword id="KW-0573">Peptidoglycan synthesis</keyword>
<keyword id="KW-1185">Reference proteome</keyword>
<keyword id="KW-0808">Transferase</keyword>
<keyword id="KW-0812">Transmembrane</keyword>
<keyword id="KW-1133">Transmembrane helix</keyword>
<evidence type="ECO:0000255" key="1">
    <source>
        <dbReference type="HAMAP-Rule" id="MF_00038"/>
    </source>
</evidence>
<proteinExistence type="inferred from homology"/>
<sequence>MLLMLTQWLQGLSPELSFLRVFQYLTLRAVMAALTALLIGLIAGPKVIRMLTSLKIGQPIRGYAMQTHLSKSGTPTMGGVLILGSIAISTLLWFDLSNRFVWIVLAVTLGFGAIGWVDDWRKVVNKDPEGMRSREKYFWQSVIGLLAALYLVFSISENSNTRVFELFITWVQSGFLMDLPPKAGLLVPFFKEVSYPLGVLGFVILTYLVIVGSSNAVNLTDGLDGLAIMPVIMVGASLGIFAYVTGNAGYAKYLLFPYIAGSGELLIFCAAMAGAGLAFLWFNTHPAQVFMGDVGALALGAALGTIAVIVRQEIVLAIMGGIFVVEALSVMLQVTWFKYTKRKYGEGRRLLKMAPLHHHFEKSGWKETQVVVRFWIITMLLCLVGLTTLKLR</sequence>
<dbReference type="EC" id="2.7.8.13" evidence="1"/>
<dbReference type="EMBL" id="CP001392">
    <property type="protein sequence ID" value="ACM34416.1"/>
    <property type="molecule type" value="Genomic_DNA"/>
</dbReference>
<dbReference type="RefSeq" id="WP_011806767.1">
    <property type="nucleotide sequence ID" value="NC_011992.1"/>
</dbReference>
<dbReference type="SMR" id="B9MFR5"/>
<dbReference type="KEGG" id="dia:Dtpsy_2983"/>
<dbReference type="eggNOG" id="COG0472">
    <property type="taxonomic scope" value="Bacteria"/>
</dbReference>
<dbReference type="HOGENOM" id="CLU_023982_0_0_4"/>
<dbReference type="UniPathway" id="UPA00219"/>
<dbReference type="Proteomes" id="UP000000450">
    <property type="component" value="Chromosome"/>
</dbReference>
<dbReference type="GO" id="GO:0005886">
    <property type="term" value="C:plasma membrane"/>
    <property type="evidence" value="ECO:0007669"/>
    <property type="project" value="UniProtKB-SubCell"/>
</dbReference>
<dbReference type="GO" id="GO:0046872">
    <property type="term" value="F:metal ion binding"/>
    <property type="evidence" value="ECO:0007669"/>
    <property type="project" value="UniProtKB-KW"/>
</dbReference>
<dbReference type="GO" id="GO:0008963">
    <property type="term" value="F:phospho-N-acetylmuramoyl-pentapeptide-transferase activity"/>
    <property type="evidence" value="ECO:0007669"/>
    <property type="project" value="UniProtKB-UniRule"/>
</dbReference>
<dbReference type="GO" id="GO:0051992">
    <property type="term" value="F:UDP-N-acetylmuramoyl-L-alanyl-D-glutamyl-meso-2,6-diaminopimelyl-D-alanyl-D-alanine:undecaprenyl-phosphate transferase activity"/>
    <property type="evidence" value="ECO:0007669"/>
    <property type="project" value="RHEA"/>
</dbReference>
<dbReference type="GO" id="GO:0051301">
    <property type="term" value="P:cell division"/>
    <property type="evidence" value="ECO:0007669"/>
    <property type="project" value="UniProtKB-KW"/>
</dbReference>
<dbReference type="GO" id="GO:0071555">
    <property type="term" value="P:cell wall organization"/>
    <property type="evidence" value="ECO:0007669"/>
    <property type="project" value="UniProtKB-KW"/>
</dbReference>
<dbReference type="GO" id="GO:0009252">
    <property type="term" value="P:peptidoglycan biosynthetic process"/>
    <property type="evidence" value="ECO:0007669"/>
    <property type="project" value="UniProtKB-UniRule"/>
</dbReference>
<dbReference type="GO" id="GO:0008360">
    <property type="term" value="P:regulation of cell shape"/>
    <property type="evidence" value="ECO:0007669"/>
    <property type="project" value="UniProtKB-KW"/>
</dbReference>
<dbReference type="CDD" id="cd06852">
    <property type="entry name" value="GT_MraY"/>
    <property type="match status" value="1"/>
</dbReference>
<dbReference type="HAMAP" id="MF_00038">
    <property type="entry name" value="MraY"/>
    <property type="match status" value="1"/>
</dbReference>
<dbReference type="InterPro" id="IPR000715">
    <property type="entry name" value="Glycosyl_transferase_4"/>
</dbReference>
<dbReference type="InterPro" id="IPR003524">
    <property type="entry name" value="PNAcMuramoyl-5peptid_Trfase"/>
</dbReference>
<dbReference type="InterPro" id="IPR018480">
    <property type="entry name" value="PNAcMuramoyl-5peptid_Trfase_CS"/>
</dbReference>
<dbReference type="NCBIfam" id="TIGR00445">
    <property type="entry name" value="mraY"/>
    <property type="match status" value="1"/>
</dbReference>
<dbReference type="PANTHER" id="PTHR22926">
    <property type="entry name" value="PHOSPHO-N-ACETYLMURAMOYL-PENTAPEPTIDE-TRANSFERASE"/>
    <property type="match status" value="1"/>
</dbReference>
<dbReference type="PANTHER" id="PTHR22926:SF5">
    <property type="entry name" value="PHOSPHO-N-ACETYLMURAMOYL-PENTAPEPTIDE-TRANSFERASE HOMOLOG"/>
    <property type="match status" value="1"/>
</dbReference>
<dbReference type="Pfam" id="PF00953">
    <property type="entry name" value="Glycos_transf_4"/>
    <property type="match status" value="1"/>
</dbReference>
<dbReference type="Pfam" id="PF10555">
    <property type="entry name" value="MraY_sig1"/>
    <property type="match status" value="1"/>
</dbReference>
<dbReference type="PROSITE" id="PS01347">
    <property type="entry name" value="MRAY_1"/>
    <property type="match status" value="1"/>
</dbReference>
<dbReference type="PROSITE" id="PS01348">
    <property type="entry name" value="MRAY_2"/>
    <property type="match status" value="1"/>
</dbReference>
<protein>
    <recommendedName>
        <fullName evidence="1">Phospho-N-acetylmuramoyl-pentapeptide-transferase</fullName>
        <ecNumber evidence="1">2.7.8.13</ecNumber>
    </recommendedName>
    <alternativeName>
        <fullName evidence="1">UDP-MurNAc-pentapeptide phosphotransferase</fullName>
    </alternativeName>
</protein>
<name>MRAY_ACIET</name>
<comment type="function">
    <text evidence="1">Catalyzes the initial step of the lipid cycle reactions in the biosynthesis of the cell wall peptidoglycan: transfers peptidoglycan precursor phospho-MurNAc-pentapeptide from UDP-MurNAc-pentapeptide onto the lipid carrier undecaprenyl phosphate, yielding undecaprenyl-pyrophosphoryl-MurNAc-pentapeptide, known as lipid I.</text>
</comment>
<comment type="catalytic activity">
    <reaction evidence="1">
        <text>UDP-N-acetyl-alpha-D-muramoyl-L-alanyl-gamma-D-glutamyl-meso-2,6-diaminopimeloyl-D-alanyl-D-alanine + di-trans,octa-cis-undecaprenyl phosphate = di-trans,octa-cis-undecaprenyl diphospho-N-acetyl-alpha-D-muramoyl-L-alanyl-D-glutamyl-meso-2,6-diaminopimeloyl-D-alanyl-D-alanine + UMP</text>
        <dbReference type="Rhea" id="RHEA:28386"/>
        <dbReference type="ChEBI" id="CHEBI:57865"/>
        <dbReference type="ChEBI" id="CHEBI:60392"/>
        <dbReference type="ChEBI" id="CHEBI:61386"/>
        <dbReference type="ChEBI" id="CHEBI:61387"/>
        <dbReference type="EC" id="2.7.8.13"/>
    </reaction>
</comment>
<comment type="cofactor">
    <cofactor evidence="1">
        <name>Mg(2+)</name>
        <dbReference type="ChEBI" id="CHEBI:18420"/>
    </cofactor>
</comment>
<comment type="pathway">
    <text evidence="1">Cell wall biogenesis; peptidoglycan biosynthesis.</text>
</comment>
<comment type="subcellular location">
    <subcellularLocation>
        <location evidence="1">Cell inner membrane</location>
        <topology evidence="1">Multi-pass membrane protein</topology>
    </subcellularLocation>
</comment>
<comment type="similarity">
    <text evidence="1">Belongs to the glycosyltransferase 4 family. MraY subfamily.</text>
</comment>
<reference key="1">
    <citation type="submission" date="2009-01" db="EMBL/GenBank/DDBJ databases">
        <title>Complete sequence of Diaphorobacter sp. TPSY.</title>
        <authorList>
            <consortium name="US DOE Joint Genome Institute"/>
            <person name="Lucas S."/>
            <person name="Copeland A."/>
            <person name="Lapidus A."/>
            <person name="Glavina del Rio T."/>
            <person name="Tice H."/>
            <person name="Bruce D."/>
            <person name="Goodwin L."/>
            <person name="Pitluck S."/>
            <person name="Chertkov O."/>
            <person name="Brettin T."/>
            <person name="Detter J.C."/>
            <person name="Han C."/>
            <person name="Larimer F."/>
            <person name="Land M."/>
            <person name="Hauser L."/>
            <person name="Kyrpides N."/>
            <person name="Mikhailova N."/>
            <person name="Coates J.D."/>
        </authorList>
    </citation>
    <scope>NUCLEOTIDE SEQUENCE [LARGE SCALE GENOMIC DNA]</scope>
    <source>
        <strain>TPSY</strain>
    </source>
</reference>
<organism>
    <name type="scientific">Acidovorax ebreus (strain TPSY)</name>
    <name type="common">Diaphorobacter sp. (strain TPSY)</name>
    <dbReference type="NCBI Taxonomy" id="535289"/>
    <lineage>
        <taxon>Bacteria</taxon>
        <taxon>Pseudomonadati</taxon>
        <taxon>Pseudomonadota</taxon>
        <taxon>Betaproteobacteria</taxon>
        <taxon>Burkholderiales</taxon>
        <taxon>Comamonadaceae</taxon>
        <taxon>Diaphorobacter</taxon>
    </lineage>
</organism>